<comment type="function">
    <text evidence="1">Involved in peptide bond synthesis. Stimulates efficient translation and peptide-bond synthesis on native or reconstituted 70S ribosomes in vitro. Probably functions indirectly by altering the affinity of the ribosome for aminoacyl-tRNA, thus increasing their reactivity as acceptors for peptidyl transferase.</text>
</comment>
<comment type="pathway">
    <text evidence="1">Protein biosynthesis; polypeptide chain elongation.</text>
</comment>
<comment type="subcellular location">
    <subcellularLocation>
        <location evidence="1">Cytoplasm</location>
    </subcellularLocation>
</comment>
<comment type="similarity">
    <text evidence="1">Belongs to the elongation factor P family.</text>
</comment>
<dbReference type="EMBL" id="CP000158">
    <property type="protein sequence ID" value="ABI75846.1"/>
    <property type="molecule type" value="Genomic_DNA"/>
</dbReference>
<dbReference type="RefSeq" id="WP_011648112.1">
    <property type="nucleotide sequence ID" value="NC_008358.1"/>
</dbReference>
<dbReference type="SMR" id="Q0BXH7"/>
<dbReference type="STRING" id="228405.HNE_3140"/>
<dbReference type="KEGG" id="hne:HNE_3140"/>
<dbReference type="eggNOG" id="COG0231">
    <property type="taxonomic scope" value="Bacteria"/>
</dbReference>
<dbReference type="HOGENOM" id="CLU_074944_1_1_5"/>
<dbReference type="UniPathway" id="UPA00345"/>
<dbReference type="Proteomes" id="UP000001959">
    <property type="component" value="Chromosome"/>
</dbReference>
<dbReference type="GO" id="GO:0005737">
    <property type="term" value="C:cytoplasm"/>
    <property type="evidence" value="ECO:0007669"/>
    <property type="project" value="UniProtKB-SubCell"/>
</dbReference>
<dbReference type="GO" id="GO:0003746">
    <property type="term" value="F:translation elongation factor activity"/>
    <property type="evidence" value="ECO:0007669"/>
    <property type="project" value="UniProtKB-UniRule"/>
</dbReference>
<dbReference type="GO" id="GO:0043043">
    <property type="term" value="P:peptide biosynthetic process"/>
    <property type="evidence" value="ECO:0007669"/>
    <property type="project" value="InterPro"/>
</dbReference>
<dbReference type="CDD" id="cd04470">
    <property type="entry name" value="S1_EF-P_repeat_1"/>
    <property type="match status" value="1"/>
</dbReference>
<dbReference type="CDD" id="cd05794">
    <property type="entry name" value="S1_EF-P_repeat_2"/>
    <property type="match status" value="1"/>
</dbReference>
<dbReference type="FunFam" id="2.40.50.140:FF:000004">
    <property type="entry name" value="Elongation factor P"/>
    <property type="match status" value="1"/>
</dbReference>
<dbReference type="FunFam" id="2.40.50.140:FF:000009">
    <property type="entry name" value="Elongation factor P"/>
    <property type="match status" value="1"/>
</dbReference>
<dbReference type="Gene3D" id="2.30.30.30">
    <property type="match status" value="1"/>
</dbReference>
<dbReference type="Gene3D" id="2.40.50.140">
    <property type="entry name" value="Nucleic acid-binding proteins"/>
    <property type="match status" value="2"/>
</dbReference>
<dbReference type="HAMAP" id="MF_00141">
    <property type="entry name" value="EF_P"/>
    <property type="match status" value="1"/>
</dbReference>
<dbReference type="InterPro" id="IPR015365">
    <property type="entry name" value="Elong-fact-P_C"/>
</dbReference>
<dbReference type="InterPro" id="IPR012340">
    <property type="entry name" value="NA-bd_OB-fold"/>
</dbReference>
<dbReference type="InterPro" id="IPR014722">
    <property type="entry name" value="Rib_uL2_dom2"/>
</dbReference>
<dbReference type="InterPro" id="IPR020599">
    <property type="entry name" value="Transl_elong_fac_P/YeiP"/>
</dbReference>
<dbReference type="InterPro" id="IPR013185">
    <property type="entry name" value="Transl_elong_KOW-like"/>
</dbReference>
<dbReference type="InterPro" id="IPR001059">
    <property type="entry name" value="Transl_elong_P/YeiP_cen"/>
</dbReference>
<dbReference type="InterPro" id="IPR013852">
    <property type="entry name" value="Transl_elong_P/YeiP_CS"/>
</dbReference>
<dbReference type="InterPro" id="IPR011768">
    <property type="entry name" value="Transl_elongation_fac_P"/>
</dbReference>
<dbReference type="InterPro" id="IPR008991">
    <property type="entry name" value="Translation_prot_SH3-like_sf"/>
</dbReference>
<dbReference type="NCBIfam" id="TIGR00038">
    <property type="entry name" value="efp"/>
    <property type="match status" value="1"/>
</dbReference>
<dbReference type="NCBIfam" id="NF001810">
    <property type="entry name" value="PRK00529.1"/>
    <property type="match status" value="1"/>
</dbReference>
<dbReference type="PANTHER" id="PTHR30053">
    <property type="entry name" value="ELONGATION FACTOR P"/>
    <property type="match status" value="1"/>
</dbReference>
<dbReference type="PANTHER" id="PTHR30053:SF14">
    <property type="entry name" value="TRANSLATION ELONGATION FACTOR KOW-LIKE DOMAIN-CONTAINING PROTEIN"/>
    <property type="match status" value="1"/>
</dbReference>
<dbReference type="Pfam" id="PF01132">
    <property type="entry name" value="EFP"/>
    <property type="match status" value="1"/>
</dbReference>
<dbReference type="Pfam" id="PF08207">
    <property type="entry name" value="EFP_N"/>
    <property type="match status" value="1"/>
</dbReference>
<dbReference type="Pfam" id="PF09285">
    <property type="entry name" value="Elong-fact-P_C"/>
    <property type="match status" value="1"/>
</dbReference>
<dbReference type="PIRSF" id="PIRSF005901">
    <property type="entry name" value="EF-P"/>
    <property type="match status" value="1"/>
</dbReference>
<dbReference type="SMART" id="SM01185">
    <property type="entry name" value="EFP"/>
    <property type="match status" value="1"/>
</dbReference>
<dbReference type="SMART" id="SM00841">
    <property type="entry name" value="Elong-fact-P_C"/>
    <property type="match status" value="1"/>
</dbReference>
<dbReference type="SUPFAM" id="SSF50249">
    <property type="entry name" value="Nucleic acid-binding proteins"/>
    <property type="match status" value="2"/>
</dbReference>
<dbReference type="SUPFAM" id="SSF50104">
    <property type="entry name" value="Translation proteins SH3-like domain"/>
    <property type="match status" value="1"/>
</dbReference>
<dbReference type="PROSITE" id="PS01275">
    <property type="entry name" value="EFP"/>
    <property type="match status" value="1"/>
</dbReference>
<keyword id="KW-0963">Cytoplasm</keyword>
<keyword id="KW-0251">Elongation factor</keyword>
<keyword id="KW-0648">Protein biosynthesis</keyword>
<keyword id="KW-1185">Reference proteome</keyword>
<reference key="1">
    <citation type="journal article" date="2006" name="J. Bacteriol.">
        <title>Comparative genomic evidence for a close relationship between the dimorphic prosthecate bacteria Hyphomonas neptunium and Caulobacter crescentus.</title>
        <authorList>
            <person name="Badger J.H."/>
            <person name="Hoover T.R."/>
            <person name="Brun Y.V."/>
            <person name="Weiner R.M."/>
            <person name="Laub M.T."/>
            <person name="Alexandre G."/>
            <person name="Mrazek J."/>
            <person name="Ren Q."/>
            <person name="Paulsen I.T."/>
            <person name="Nelson K.E."/>
            <person name="Khouri H.M."/>
            <person name="Radune D."/>
            <person name="Sosa J."/>
            <person name="Dodson R.J."/>
            <person name="Sullivan S.A."/>
            <person name="Rosovitz M.J."/>
            <person name="Madupu R."/>
            <person name="Brinkac L.M."/>
            <person name="Durkin A.S."/>
            <person name="Daugherty S.C."/>
            <person name="Kothari S.P."/>
            <person name="Giglio M.G."/>
            <person name="Zhou L."/>
            <person name="Haft D.H."/>
            <person name="Selengut J.D."/>
            <person name="Davidsen T.M."/>
            <person name="Yang Q."/>
            <person name="Zafar N."/>
            <person name="Ward N.L."/>
        </authorList>
    </citation>
    <scope>NUCLEOTIDE SEQUENCE [LARGE SCALE GENOMIC DNA]</scope>
    <source>
        <strain>ATCC 15444</strain>
    </source>
</reference>
<name>EFP_HYPNA</name>
<feature type="chain" id="PRO_1000010762" description="Elongation factor P">
    <location>
        <begin position="1"/>
        <end position="190"/>
    </location>
</feature>
<proteinExistence type="inferred from homology"/>
<evidence type="ECO:0000255" key="1">
    <source>
        <dbReference type="HAMAP-Rule" id="MF_00141"/>
    </source>
</evidence>
<protein>
    <recommendedName>
        <fullName evidence="1">Elongation factor P</fullName>
        <shortName evidence="1">EF-P</shortName>
    </recommendedName>
</protein>
<accession>Q0BXH7</accession>
<sequence length="190" mass="20870">MAVEIAADIRRGNIIEHTDGQLYVVLKAESFRPGKGTPTTTIEMRRISDGIKVVNTFKTSEKLEKAFVEEVEHTYLYPEGDNFVFMNSANYEQVTVSGAMVGDGAPYLQENMPVSLQMFNGDPVSITLPPRFTAEIVETEPVVKGQTASGSYKPAILENGVRIMVPAHVGVGTRVIINTEDGTYLERAKD</sequence>
<organism>
    <name type="scientific">Hyphomonas neptunium (strain ATCC 15444)</name>
    <dbReference type="NCBI Taxonomy" id="228405"/>
    <lineage>
        <taxon>Bacteria</taxon>
        <taxon>Pseudomonadati</taxon>
        <taxon>Pseudomonadota</taxon>
        <taxon>Alphaproteobacteria</taxon>
        <taxon>Hyphomonadales</taxon>
        <taxon>Hyphomonadaceae</taxon>
        <taxon>Hyphomonas</taxon>
    </lineage>
</organism>
<gene>
    <name evidence="1" type="primary">efp</name>
    <name type="ordered locus">HNE_3140</name>
</gene>